<keyword id="KW-0195">Cyclin</keyword>
<keyword id="KW-1185">Reference proteome</keyword>
<organism evidence="9">
    <name type="scientific">Caenorhabditis elegans</name>
    <dbReference type="NCBI Taxonomy" id="6239"/>
    <lineage>
        <taxon>Eukaryota</taxon>
        <taxon>Metazoa</taxon>
        <taxon>Ecdysozoa</taxon>
        <taxon>Nematoda</taxon>
        <taxon>Chromadorea</taxon>
        <taxon>Rhabditida</taxon>
        <taxon>Rhabditina</taxon>
        <taxon>Rhabditomorpha</taxon>
        <taxon>Rhabditoidea</taxon>
        <taxon>Rhabditidae</taxon>
        <taxon>Peloderinae</taxon>
        <taxon>Caenorhabditis</taxon>
    </lineage>
</organism>
<proteinExistence type="evidence at protein level"/>
<evidence type="ECO:0000250" key="1">
    <source>
        <dbReference type="UniProtKB" id="Q9UK58"/>
    </source>
</evidence>
<evidence type="ECO:0000255" key="2"/>
<evidence type="ECO:0000255" key="3">
    <source>
        <dbReference type="RuleBase" id="RU000383"/>
    </source>
</evidence>
<evidence type="ECO:0000256" key="4">
    <source>
        <dbReference type="SAM" id="MobiDB-lite"/>
    </source>
</evidence>
<evidence type="ECO:0000269" key="5">
    <source>
    </source>
</evidence>
<evidence type="ECO:0000269" key="6">
    <source>
    </source>
</evidence>
<evidence type="ECO:0000305" key="7"/>
<evidence type="ECO:0000312" key="8">
    <source>
        <dbReference type="EMBL" id="AAS64750.1"/>
    </source>
</evidence>
<evidence type="ECO:0000312" key="9">
    <source>
        <dbReference type="Proteomes" id="UP000001940"/>
    </source>
</evidence>
<evidence type="ECO:0000312" key="10">
    <source>
        <dbReference type="WormBase" id="C52E4.6a"/>
    </source>
</evidence>
<name>CYL1_CAEEL</name>
<comment type="function">
    <text evidence="1 5 6">Involved in pre-mRNA splicing (By similarity). Functions in association with cyclin-dependent kinases (CDKs) (By similarity). Involved in induction of expression of heat shock protein hsp-16.2 in response to heat shock (PubMed:15611166). Plays a role in male tail development, perhaps acting together with cell cycle regulators cdc-25.2, cdk-1, cyb-3, and cyd-1 (PubMed:27923661).</text>
</comment>
<comment type="disruption phenotype">
    <text evidence="6">RNAi-mediated knockdown causes abnormal male tail morphology.</text>
</comment>
<comment type="similarity">
    <text evidence="3">Belongs to the cyclin family.</text>
</comment>
<reference evidence="8" key="1">
    <citation type="journal article" date="2004" name="Genetics">
        <title>The L-type cyclin CYL-1 and the heat-shock-factor HSF-1 are required for heat-shock-induced protein expression in Caenorhabditis elegans.</title>
        <authorList>
            <person name="Hajdu-Cronin Y.M."/>
            <person name="Chen W.J."/>
            <person name="Sternberg P.W."/>
        </authorList>
    </citation>
    <scope>NUCLEOTIDE SEQUENCE [MRNA]</scope>
    <scope>FUNCTION</scope>
    <scope>MUTAGENESIS OF LEU-158</scope>
</reference>
<reference evidence="9" key="2">
    <citation type="journal article" date="1998" name="Science">
        <title>Genome sequence of the nematode C. elegans: a platform for investigating biology.</title>
        <authorList>
            <consortium name="The C. elegans sequencing consortium"/>
        </authorList>
    </citation>
    <scope>NUCLEOTIDE SEQUENCE [LARGE SCALE GENOMIC DNA]</scope>
    <source>
        <strain evidence="9">Bristol N2</strain>
    </source>
</reference>
<reference evidence="7" key="3">
    <citation type="journal article" date="2017" name="Biochem. Biophys. Res. Commun.">
        <title>cdc-25.2, a Caenorhabditis elegans ortholog of cdc25, is required for male tail morphogenesis.</title>
        <authorList>
            <person name="Oh S."/>
            <person name="Yoon S."/>
            <person name="Youn E."/>
            <person name="Kawasaki I."/>
            <person name="Shim Y.H."/>
        </authorList>
    </citation>
    <scope>FUNCTION</scope>
    <scope>DISRUPTION PHENOTYPE</scope>
</reference>
<sequence>MASFVEMRKLAEAKVQNMIRTIVKPKEQNGNVEPKKEEDEKFESTYKQNENTQITPSSFGKRPLYSKVDINCDKWLMTLDEESRLKIDNPPSLVDGLSKETESELRYLGCELIQQGAILLKLPQTAAATGQILFQRYYYQKSFVRYHFEHAVQACLLLASKIEEEPRRPREVYNVFHRLERLHRLQQSGHDINKETTRGMKPPAVDMNYINTKQHMINSERRILATLGFVVHVKHPHRLIVAYGHTLGITQSRPDILQRSWNYMNDGLRTDIFMRYKPETIACACIFLAARTVENPIALPSTPFHWFEAFDTSDRDVEAIALQLVGLYARRTFPNWPRIKAELDALRSVKDAEMKAVKAKEIAENLAKMAPDGEKSTSTVTIGKDSRKVSPDRKNGTKDRGEADRGKKEKDRHRRRSNDRDGRGDRRDRDKDRGDRRKDEKKDRRKRTRSRSRDRKDKNRNRDVGKRYRKESSTPPRSRR</sequence>
<feature type="chain" id="PRO_0000453733" description="Cyclin L homolog cyl-1">
    <location>
        <begin position="1"/>
        <end position="480"/>
    </location>
</feature>
<feature type="domain" description="Cyclin N-terminal" evidence="2">
    <location>
        <begin position="91"/>
        <end position="230"/>
    </location>
</feature>
<feature type="region of interest" description="Disordered" evidence="4">
    <location>
        <begin position="25"/>
        <end position="58"/>
    </location>
</feature>
<feature type="region of interest" description="Disordered" evidence="4">
    <location>
        <begin position="368"/>
        <end position="480"/>
    </location>
</feature>
<feature type="compositionally biased region" description="Basic and acidic residues" evidence="4">
    <location>
        <begin position="33"/>
        <end position="44"/>
    </location>
</feature>
<feature type="compositionally biased region" description="Polar residues" evidence="4">
    <location>
        <begin position="45"/>
        <end position="58"/>
    </location>
</feature>
<feature type="compositionally biased region" description="Basic and acidic residues" evidence="4">
    <location>
        <begin position="384"/>
        <end position="409"/>
    </location>
</feature>
<feature type="compositionally biased region" description="Basic and acidic residues" evidence="4">
    <location>
        <begin position="418"/>
        <end position="442"/>
    </location>
</feature>
<feature type="compositionally biased region" description="Basic residues" evidence="4">
    <location>
        <begin position="443"/>
        <end position="453"/>
    </location>
</feature>
<feature type="compositionally biased region" description="Basic and acidic residues" evidence="4">
    <location>
        <begin position="454"/>
        <end position="472"/>
    </location>
</feature>
<feature type="mutagenesis site" description="In sy433; Reduces induction of expression of heat shock protein hsp-16.2 in response to heat-shock." evidence="5">
    <original>L</original>
    <variation>F</variation>
    <location>
        <position position="158"/>
    </location>
</feature>
<gene>
    <name evidence="10" type="primary">cyl-1</name>
    <name evidence="10" type="ORF">C52E4.6</name>
</gene>
<dbReference type="EMBL" id="AY557405">
    <property type="protein sequence ID" value="AAS64750.1"/>
    <property type="molecule type" value="mRNA"/>
</dbReference>
<dbReference type="EMBL" id="BX284605">
    <property type="protein sequence ID" value="CAB01416.1"/>
    <property type="molecule type" value="Genomic_DNA"/>
</dbReference>
<dbReference type="PIR" id="T20154">
    <property type="entry name" value="T20154"/>
</dbReference>
<dbReference type="PIR" id="T20155">
    <property type="entry name" value="T20155"/>
</dbReference>
<dbReference type="RefSeq" id="NP_506007.1">
    <property type="nucleotide sequence ID" value="NM_073606.6"/>
</dbReference>
<dbReference type="SMR" id="G5EBX3"/>
<dbReference type="FunCoup" id="G5EBX3">
    <property type="interactions" value="3371"/>
</dbReference>
<dbReference type="IntAct" id="G5EBX3">
    <property type="interactions" value="1"/>
</dbReference>
<dbReference type="STRING" id="6239.C52E4.6a.2"/>
<dbReference type="PaxDb" id="6239-C52E4.6a.1"/>
<dbReference type="PeptideAtlas" id="G5EBX3"/>
<dbReference type="EnsemblMetazoa" id="C52E4.6a.1">
    <property type="protein sequence ID" value="C52E4.6a.1"/>
    <property type="gene ID" value="WBGene00000876"/>
</dbReference>
<dbReference type="GeneID" id="179643"/>
<dbReference type="KEGG" id="cel:CELE_C52E4.6"/>
<dbReference type="AGR" id="WB:WBGene00000876"/>
<dbReference type="CTD" id="179643"/>
<dbReference type="WormBase" id="C52E4.6a">
    <property type="protein sequence ID" value="CE17597"/>
    <property type="gene ID" value="WBGene00000876"/>
    <property type="gene designation" value="cyl-1"/>
</dbReference>
<dbReference type="eggNOG" id="KOG0835">
    <property type="taxonomic scope" value="Eukaryota"/>
</dbReference>
<dbReference type="GeneTree" id="ENSGT00940000165223"/>
<dbReference type="HOGENOM" id="CLU_022000_6_0_1"/>
<dbReference type="InParanoid" id="G5EBX3"/>
<dbReference type="OMA" id="GHKHRDG"/>
<dbReference type="OrthoDB" id="10264655at2759"/>
<dbReference type="PhylomeDB" id="G5EBX3"/>
<dbReference type="PRO" id="PR:G5EBX3"/>
<dbReference type="Proteomes" id="UP000001940">
    <property type="component" value="Chromosome V"/>
</dbReference>
<dbReference type="Bgee" id="WBGene00000876">
    <property type="expression patterns" value="Expressed in embryo and 4 other cell types or tissues"/>
</dbReference>
<dbReference type="GO" id="GO:0005634">
    <property type="term" value="C:nucleus"/>
    <property type="evidence" value="ECO:0000318"/>
    <property type="project" value="GO_Central"/>
</dbReference>
<dbReference type="GO" id="GO:0016538">
    <property type="term" value="F:cyclin-dependent protein serine/threonine kinase regulator activity"/>
    <property type="evidence" value="ECO:0000318"/>
    <property type="project" value="GO_Central"/>
</dbReference>
<dbReference type="GO" id="GO:0045138">
    <property type="term" value="P:nematode male tail tip morphogenesis"/>
    <property type="evidence" value="ECO:0000315"/>
    <property type="project" value="UniProtKB"/>
</dbReference>
<dbReference type="GO" id="GO:0006357">
    <property type="term" value="P:regulation of transcription by RNA polymerase II"/>
    <property type="evidence" value="ECO:0007669"/>
    <property type="project" value="InterPro"/>
</dbReference>
<dbReference type="CDD" id="cd20532">
    <property type="entry name" value="CYCLIN_CCNL_rpt1"/>
    <property type="match status" value="1"/>
</dbReference>
<dbReference type="CDD" id="cd20533">
    <property type="entry name" value="CYCLIN_CCNL_rpt2"/>
    <property type="match status" value="1"/>
</dbReference>
<dbReference type="FunFam" id="1.10.472.10:FF:000108">
    <property type="entry name" value="Cyclin-dependent protein kinase regulator, putative"/>
    <property type="match status" value="1"/>
</dbReference>
<dbReference type="FunFam" id="1.10.472.10:FF:000315">
    <property type="entry name" value="RNA polymerase II holoenzyme cyclin-like subunit"/>
    <property type="match status" value="1"/>
</dbReference>
<dbReference type="Gene3D" id="1.10.472.10">
    <property type="entry name" value="Cyclin-like"/>
    <property type="match status" value="2"/>
</dbReference>
<dbReference type="InterPro" id="IPR013763">
    <property type="entry name" value="Cyclin-like_dom"/>
</dbReference>
<dbReference type="InterPro" id="IPR036915">
    <property type="entry name" value="Cyclin-like_sf"/>
</dbReference>
<dbReference type="InterPro" id="IPR043198">
    <property type="entry name" value="Cyclin/Ssn8"/>
</dbReference>
<dbReference type="InterPro" id="IPR006671">
    <property type="entry name" value="Cyclin_N"/>
</dbReference>
<dbReference type="PANTHER" id="PTHR10026">
    <property type="entry name" value="CYCLIN"/>
    <property type="match status" value="1"/>
</dbReference>
<dbReference type="Pfam" id="PF00134">
    <property type="entry name" value="Cyclin_N"/>
    <property type="match status" value="1"/>
</dbReference>
<dbReference type="PIRSF" id="PIRSF036580">
    <property type="entry name" value="Cyclin_L"/>
    <property type="match status" value="1"/>
</dbReference>
<dbReference type="SMART" id="SM00385">
    <property type="entry name" value="CYCLIN"/>
    <property type="match status" value="2"/>
</dbReference>
<dbReference type="SUPFAM" id="SSF47954">
    <property type="entry name" value="Cyclin-like"/>
    <property type="match status" value="2"/>
</dbReference>
<accession>G5EBX3</accession>
<protein>
    <recommendedName>
        <fullName evidence="7">Cyclin L homolog cyl-1</fullName>
    </recommendedName>
</protein>